<feature type="transit peptide" description="Mitochondrion" evidence="1">
    <location>
        <begin position="1"/>
        <end position="29"/>
    </location>
</feature>
<feature type="chain" id="PRO_0000023284" description="Large ribosomal subunit protein mL38">
    <location>
        <begin position="30"/>
        <end position="367"/>
    </location>
</feature>
<feature type="sequence conflict" description="In Ref. 4; AA sequence." evidence="10" ref="4">
    <original>P</original>
    <variation>D</variation>
    <location>
        <position position="113"/>
    </location>
</feature>
<organism>
    <name type="scientific">Saccharomyces cerevisiae (strain ATCC 204508 / S288c)</name>
    <name type="common">Baker's yeast</name>
    <dbReference type="NCBI Taxonomy" id="559292"/>
    <lineage>
        <taxon>Eukaryota</taxon>
        <taxon>Fungi</taxon>
        <taxon>Dikarya</taxon>
        <taxon>Ascomycota</taxon>
        <taxon>Saccharomycotina</taxon>
        <taxon>Saccharomycetes</taxon>
        <taxon>Saccharomycetales</taxon>
        <taxon>Saccharomycetaceae</taxon>
        <taxon>Saccharomyces</taxon>
    </lineage>
</organism>
<evidence type="ECO:0000255" key="1"/>
<evidence type="ECO:0000269" key="2">
    <source>
    </source>
</evidence>
<evidence type="ECO:0000269" key="3">
    <source>
    </source>
</evidence>
<evidence type="ECO:0000269" key="4">
    <source>
    </source>
</evidence>
<evidence type="ECO:0000269" key="5">
    <source>
    </source>
</evidence>
<evidence type="ECO:0000269" key="6">
    <source>
    </source>
</evidence>
<evidence type="ECO:0000269" key="7">
    <source>
    </source>
</evidence>
<evidence type="ECO:0000269" key="8">
    <source>
    </source>
</evidence>
<evidence type="ECO:0000303" key="9">
    <source>
    </source>
</evidence>
<evidence type="ECO:0000305" key="10"/>
<evidence type="ECO:0000305" key="11">
    <source>
    </source>
</evidence>
<evidence type="ECO:0000305" key="12">
    <source>
    </source>
</evidence>
<reference key="1">
    <citation type="journal article" date="1997" name="Nature">
        <title>The nucleotide sequence of Saccharomyces cerevisiae chromosome IV.</title>
        <authorList>
            <person name="Jacq C."/>
            <person name="Alt-Moerbe J."/>
            <person name="Andre B."/>
            <person name="Arnold W."/>
            <person name="Bahr A."/>
            <person name="Ballesta J.P.G."/>
            <person name="Bargues M."/>
            <person name="Baron L."/>
            <person name="Becker A."/>
            <person name="Biteau N."/>
            <person name="Bloecker H."/>
            <person name="Blugeon C."/>
            <person name="Boskovic J."/>
            <person name="Brandt P."/>
            <person name="Brueckner M."/>
            <person name="Buitrago M.J."/>
            <person name="Coster F."/>
            <person name="Delaveau T."/>
            <person name="del Rey F."/>
            <person name="Dujon B."/>
            <person name="Eide L.G."/>
            <person name="Garcia-Cantalejo J.M."/>
            <person name="Goffeau A."/>
            <person name="Gomez-Peris A."/>
            <person name="Granotier C."/>
            <person name="Hanemann V."/>
            <person name="Hankeln T."/>
            <person name="Hoheisel J.D."/>
            <person name="Jaeger W."/>
            <person name="Jimenez A."/>
            <person name="Jonniaux J.-L."/>
            <person name="Kraemer C."/>
            <person name="Kuester H."/>
            <person name="Laamanen P."/>
            <person name="Legros Y."/>
            <person name="Louis E.J."/>
            <person name="Moeller-Rieker S."/>
            <person name="Monnet A."/>
            <person name="Moro M."/>
            <person name="Mueller-Auer S."/>
            <person name="Nussbaumer B."/>
            <person name="Paricio N."/>
            <person name="Paulin L."/>
            <person name="Perea J."/>
            <person name="Perez-Alonso M."/>
            <person name="Perez-Ortin J.E."/>
            <person name="Pohl T.M."/>
            <person name="Prydz H."/>
            <person name="Purnelle B."/>
            <person name="Rasmussen S.W."/>
            <person name="Remacha M.A."/>
            <person name="Revuelta J.L."/>
            <person name="Rieger M."/>
            <person name="Salom D."/>
            <person name="Saluz H.P."/>
            <person name="Saiz J.E."/>
            <person name="Saren A.-M."/>
            <person name="Schaefer M."/>
            <person name="Scharfe M."/>
            <person name="Schmidt E.R."/>
            <person name="Schneider C."/>
            <person name="Scholler P."/>
            <person name="Schwarz S."/>
            <person name="Soler-Mira A."/>
            <person name="Urrestarazu L.A."/>
            <person name="Verhasselt P."/>
            <person name="Vissers S."/>
            <person name="Voet M."/>
            <person name="Volckaert G."/>
            <person name="Wagner G."/>
            <person name="Wambutt R."/>
            <person name="Wedler E."/>
            <person name="Wedler H."/>
            <person name="Woelfl S."/>
            <person name="Harris D.E."/>
            <person name="Bowman S."/>
            <person name="Brown D."/>
            <person name="Churcher C.M."/>
            <person name="Connor R."/>
            <person name="Dedman K."/>
            <person name="Gentles S."/>
            <person name="Hamlin N."/>
            <person name="Hunt S."/>
            <person name="Jones L."/>
            <person name="McDonald S."/>
            <person name="Murphy L.D."/>
            <person name="Niblett D."/>
            <person name="Odell C."/>
            <person name="Oliver K."/>
            <person name="Rajandream M.A."/>
            <person name="Richards C."/>
            <person name="Shore L."/>
            <person name="Walsh S.V."/>
            <person name="Barrell B.G."/>
            <person name="Dietrich F.S."/>
            <person name="Mulligan J.T."/>
            <person name="Allen E."/>
            <person name="Araujo R."/>
            <person name="Aviles E."/>
            <person name="Berno A."/>
            <person name="Carpenter J."/>
            <person name="Chen E."/>
            <person name="Cherry J.M."/>
            <person name="Chung E."/>
            <person name="Duncan M."/>
            <person name="Hunicke-Smith S."/>
            <person name="Hyman R.W."/>
            <person name="Komp C."/>
            <person name="Lashkari D."/>
            <person name="Lew H."/>
            <person name="Lin D."/>
            <person name="Mosedale D."/>
            <person name="Nakahara K."/>
            <person name="Namath A."/>
            <person name="Oefner P."/>
            <person name="Oh C."/>
            <person name="Petel F.X."/>
            <person name="Roberts D."/>
            <person name="Schramm S."/>
            <person name="Schroeder M."/>
            <person name="Shogren T."/>
            <person name="Shroff N."/>
            <person name="Winant A."/>
            <person name="Yelton M.A."/>
            <person name="Botstein D."/>
            <person name="Davis R.W."/>
            <person name="Johnston M."/>
            <person name="Andrews S."/>
            <person name="Brinkman R."/>
            <person name="Cooper J."/>
            <person name="Ding H."/>
            <person name="Du Z."/>
            <person name="Favello A."/>
            <person name="Fulton L."/>
            <person name="Gattung S."/>
            <person name="Greco T."/>
            <person name="Hallsworth K."/>
            <person name="Hawkins J."/>
            <person name="Hillier L.W."/>
            <person name="Jier M."/>
            <person name="Johnson D."/>
            <person name="Johnston L."/>
            <person name="Kirsten J."/>
            <person name="Kucaba T."/>
            <person name="Langston Y."/>
            <person name="Latreille P."/>
            <person name="Le T."/>
            <person name="Mardis E."/>
            <person name="Menezes S."/>
            <person name="Miller N."/>
            <person name="Nhan M."/>
            <person name="Pauley A."/>
            <person name="Peluso D."/>
            <person name="Rifkin L."/>
            <person name="Riles L."/>
            <person name="Taich A."/>
            <person name="Trevaskis E."/>
            <person name="Vignati D."/>
            <person name="Wilcox L."/>
            <person name="Wohldman P."/>
            <person name="Vaudin M."/>
            <person name="Wilson R."/>
            <person name="Waterston R."/>
            <person name="Albermann K."/>
            <person name="Hani J."/>
            <person name="Heumann K."/>
            <person name="Kleine K."/>
            <person name="Mewes H.-W."/>
            <person name="Zollner A."/>
            <person name="Zaccaria P."/>
        </authorList>
    </citation>
    <scope>NUCLEOTIDE SEQUENCE [LARGE SCALE GENOMIC DNA]</scope>
    <source>
        <strain>ATCC 204508 / S288c</strain>
    </source>
</reference>
<reference key="2">
    <citation type="journal article" date="2014" name="G3 (Bethesda)">
        <title>The reference genome sequence of Saccharomyces cerevisiae: Then and now.</title>
        <authorList>
            <person name="Engel S.R."/>
            <person name="Dietrich F.S."/>
            <person name="Fisk D.G."/>
            <person name="Binkley G."/>
            <person name="Balakrishnan R."/>
            <person name="Costanzo M.C."/>
            <person name="Dwight S.S."/>
            <person name="Hitz B.C."/>
            <person name="Karra K."/>
            <person name="Nash R.S."/>
            <person name="Weng S."/>
            <person name="Wong E.D."/>
            <person name="Lloyd P."/>
            <person name="Skrzypek M.S."/>
            <person name="Miyasato S.R."/>
            <person name="Simison M."/>
            <person name="Cherry J.M."/>
        </authorList>
    </citation>
    <scope>GENOME REANNOTATION</scope>
    <source>
        <strain>ATCC 204508 / S288c</strain>
    </source>
</reference>
<reference key="3">
    <citation type="journal article" date="2003" name="J. Biol. Chem.">
        <title>The yeast mitochondrial degradosome. Its composition, interplay between RNA helicase and RNase activities and the role in mitochondrial RNA metabolism.</title>
        <authorList>
            <person name="Dziembowski A."/>
            <person name="Piwowarski J."/>
            <person name="Hoser R."/>
            <person name="Minczuk M."/>
            <person name="Dmochowska A."/>
            <person name="Siep M."/>
            <person name="van der Spek H."/>
            <person name="Grivell L.A."/>
            <person name="Stepien P.P."/>
        </authorList>
    </citation>
    <scope>PROTEIN SEQUENCE OF 64-84; 130-140; 159-175 AND 289-295</scope>
</reference>
<reference key="4">
    <citation type="journal article" date="1997" name="Eur. J. Biochem.">
        <title>Identification and characterization of the genes for mitochondrial ribosomal proteins of Saccharomyces cerevisiae.</title>
        <authorList>
            <person name="Kitakawa M."/>
            <person name="Graack H.-R."/>
            <person name="Grohmann L."/>
            <person name="Goldschmidt-Reisin S."/>
            <person name="Herfurth E."/>
            <person name="Wittmann-Liebold B."/>
            <person name="Nishimura T."/>
            <person name="Isono K."/>
        </authorList>
    </citation>
    <scope>PROTEIN SEQUENCE OF 108-116</scope>
    <scope>SUBUNIT</scope>
    <source>
        <strain>07173</strain>
    </source>
</reference>
<reference key="5">
    <citation type="journal article" date="2002" name="Eur. J. Biochem.">
        <title>Tag-mediated isolation of yeast mitochondrial ribosome and mass spectrometric identification of its new components.</title>
        <authorList>
            <person name="Gan X."/>
            <person name="Kitakawa M."/>
            <person name="Yoshino K."/>
            <person name="Oshiro N."/>
            <person name="Yonezawa K."/>
            <person name="Isono K."/>
        </authorList>
    </citation>
    <scope>IDENTIFICATION IN THE MITOCHONDRIAL RIBOSOMAL LARGE COMPLEX</scope>
    <scope>IDENTIFICATION BY MASS SPECTROMETRY</scope>
</reference>
<reference key="6">
    <citation type="journal article" date="2003" name="Nature">
        <title>Global analysis of protein localization in budding yeast.</title>
        <authorList>
            <person name="Huh W.-K."/>
            <person name="Falvo J.V."/>
            <person name="Gerke L.C."/>
            <person name="Carroll A.S."/>
            <person name="Howson R.W."/>
            <person name="Weissman J.S."/>
            <person name="O'Shea E.K."/>
        </authorList>
    </citation>
    <scope>SUBCELLULAR LOCATION [LARGE SCALE ANALYSIS]</scope>
</reference>
<reference key="7">
    <citation type="journal article" date="2003" name="Nature">
        <title>Global analysis of protein expression in yeast.</title>
        <authorList>
            <person name="Ghaemmaghami S."/>
            <person name="Huh W.-K."/>
            <person name="Bower K."/>
            <person name="Howson R.W."/>
            <person name="Belle A."/>
            <person name="Dephoure N."/>
            <person name="O'Shea E.K."/>
            <person name="Weissman J.S."/>
        </authorList>
    </citation>
    <scope>LEVEL OF PROTEIN EXPRESSION [LARGE SCALE ANALYSIS]</scope>
</reference>
<reference key="8">
    <citation type="journal article" date="2003" name="Proc. Natl. Acad. Sci. U.S.A.">
        <title>The proteome of Saccharomyces cerevisiae mitochondria.</title>
        <authorList>
            <person name="Sickmann A."/>
            <person name="Reinders J."/>
            <person name="Wagner Y."/>
            <person name="Joppich C."/>
            <person name="Zahedi R.P."/>
            <person name="Meyer H.E."/>
            <person name="Schoenfisch B."/>
            <person name="Perschil I."/>
            <person name="Chacinska A."/>
            <person name="Guiard B."/>
            <person name="Rehling P."/>
            <person name="Pfanner N."/>
            <person name="Meisinger C."/>
        </authorList>
    </citation>
    <scope>SUBCELLULAR LOCATION [LARGE SCALE ANALYSIS]</scope>
    <source>
        <strain>ATCC 76625 / YPH499</strain>
    </source>
</reference>
<reference key="9">
    <citation type="journal article" date="2015" name="Nat. Commun.">
        <title>Organization of the mitochondrial translation machinery studied in situ by cryoelectron tomography.</title>
        <authorList>
            <person name="Pfeffer S."/>
            <person name="Woellhaf M.W."/>
            <person name="Herrmann J.M."/>
            <person name="Forster F."/>
        </authorList>
    </citation>
    <scope>SUBCELLULAR LOCATION</scope>
</reference>
<reference key="10">
    <citation type="journal article" date="2014" name="Science">
        <title>Structure of the yeast mitochondrial large ribosomal subunit.</title>
        <authorList>
            <person name="Amunts A."/>
            <person name="Brown A."/>
            <person name="Bai X.C."/>
            <person name="Llacer J.L."/>
            <person name="Hussain T."/>
            <person name="Emsley P."/>
            <person name="Long F."/>
            <person name="Murshudov G."/>
            <person name="Scheres S.H."/>
            <person name="Ramakrishnan V."/>
        </authorList>
    </citation>
    <scope>STRUCTURE BY ELECTRON MICROSCOPY (3.20 ANGSTROMS)</scope>
    <scope>SUBUNIT</scope>
</reference>
<accession>Q06678</accession>
<accession>D6VSV4</accession>
<dbReference type="EMBL" id="U32517">
    <property type="protein sequence ID" value="AAB64758.1"/>
    <property type="molecule type" value="Genomic_DNA"/>
</dbReference>
<dbReference type="EMBL" id="BK006938">
    <property type="protein sequence ID" value="DAA12164.1"/>
    <property type="molecule type" value="Genomic_DNA"/>
</dbReference>
<dbReference type="PIR" id="S59788">
    <property type="entry name" value="S59788"/>
</dbReference>
<dbReference type="RefSeq" id="NP_010608.1">
    <property type="nucleotide sequence ID" value="NM_001180630.1"/>
</dbReference>
<dbReference type="PDB" id="3J6B">
    <property type="method" value="EM"/>
    <property type="resolution" value="3.20 A"/>
    <property type="chains" value="1=1-367"/>
</dbReference>
<dbReference type="PDB" id="5MRC">
    <property type="method" value="EM"/>
    <property type="resolution" value="3.25 A"/>
    <property type="chains" value="1=20-367"/>
</dbReference>
<dbReference type="PDB" id="5MRE">
    <property type="method" value="EM"/>
    <property type="resolution" value="3.75 A"/>
    <property type="chains" value="1=20-367"/>
</dbReference>
<dbReference type="PDB" id="5MRF">
    <property type="method" value="EM"/>
    <property type="resolution" value="4.97 A"/>
    <property type="chains" value="1=20-367"/>
</dbReference>
<dbReference type="PDBsum" id="3J6B"/>
<dbReference type="PDBsum" id="5MRC"/>
<dbReference type="PDBsum" id="5MRE"/>
<dbReference type="PDBsum" id="5MRF"/>
<dbReference type="EMDB" id="EMD-3551"/>
<dbReference type="EMDB" id="EMD-3552"/>
<dbReference type="EMDB" id="EMD-3553"/>
<dbReference type="SMR" id="Q06678"/>
<dbReference type="BioGRID" id="32379">
    <property type="interactions" value="298"/>
</dbReference>
<dbReference type="ComplexPortal" id="CPX-1602">
    <property type="entry name" value="54S mitochondrial large ribosomal subunit"/>
</dbReference>
<dbReference type="DIP" id="DIP-6832N"/>
<dbReference type="FunCoup" id="Q06678">
    <property type="interactions" value="294"/>
</dbReference>
<dbReference type="IntAct" id="Q06678">
    <property type="interactions" value="75"/>
</dbReference>
<dbReference type="MINT" id="Q06678"/>
<dbReference type="STRING" id="4932.YDR322W"/>
<dbReference type="PaxDb" id="4932-YDR322W"/>
<dbReference type="PeptideAtlas" id="Q06678"/>
<dbReference type="EnsemblFungi" id="YDR322W_mRNA">
    <property type="protein sequence ID" value="YDR322W"/>
    <property type="gene ID" value="YDR322W"/>
</dbReference>
<dbReference type="GeneID" id="851921"/>
<dbReference type="KEGG" id="sce:YDR322W"/>
<dbReference type="AGR" id="SGD:S000002730"/>
<dbReference type="SGD" id="S000002730">
    <property type="gene designation" value="MRPL35"/>
</dbReference>
<dbReference type="VEuPathDB" id="FungiDB:YDR322W"/>
<dbReference type="eggNOG" id="KOG3346">
    <property type="taxonomic scope" value="Eukaryota"/>
</dbReference>
<dbReference type="HOGENOM" id="CLU_068504_0_0_1"/>
<dbReference type="InParanoid" id="Q06678"/>
<dbReference type="OMA" id="FRTQWDE"/>
<dbReference type="OrthoDB" id="2153661at2759"/>
<dbReference type="BioCyc" id="YEAST:G3O-29879-MONOMER"/>
<dbReference type="BioGRID-ORCS" id="851921">
    <property type="hits" value="3 hits in 10 CRISPR screens"/>
</dbReference>
<dbReference type="PRO" id="PR:Q06678"/>
<dbReference type="Proteomes" id="UP000002311">
    <property type="component" value="Chromosome IV"/>
</dbReference>
<dbReference type="RNAct" id="Q06678">
    <property type="molecule type" value="protein"/>
</dbReference>
<dbReference type="GO" id="GO:0005743">
    <property type="term" value="C:mitochondrial inner membrane"/>
    <property type="evidence" value="ECO:0000303"/>
    <property type="project" value="ComplexPortal"/>
</dbReference>
<dbReference type="GO" id="GO:0005762">
    <property type="term" value="C:mitochondrial large ribosomal subunit"/>
    <property type="evidence" value="ECO:0000314"/>
    <property type="project" value="SGD"/>
</dbReference>
<dbReference type="GO" id="GO:0005739">
    <property type="term" value="C:mitochondrion"/>
    <property type="evidence" value="ECO:0007005"/>
    <property type="project" value="SGD"/>
</dbReference>
<dbReference type="GO" id="GO:0003735">
    <property type="term" value="F:structural constituent of ribosome"/>
    <property type="evidence" value="ECO:0000314"/>
    <property type="project" value="SGD"/>
</dbReference>
<dbReference type="GO" id="GO:0033617">
    <property type="term" value="P:mitochondrial cytochrome c oxidase assembly"/>
    <property type="evidence" value="ECO:0000315"/>
    <property type="project" value="SGD"/>
</dbReference>
<dbReference type="GO" id="GO:0032543">
    <property type="term" value="P:mitochondrial translation"/>
    <property type="evidence" value="ECO:0000303"/>
    <property type="project" value="ComplexPortal"/>
</dbReference>
<dbReference type="CDD" id="cd00866">
    <property type="entry name" value="PEBP_euk"/>
    <property type="match status" value="1"/>
</dbReference>
<dbReference type="FunFam" id="3.90.280.10:FF:000004">
    <property type="entry name" value="Mitochondrial large ribosomal subunit YmL35"/>
    <property type="match status" value="1"/>
</dbReference>
<dbReference type="Gene3D" id="1.20.58.1180">
    <property type="match status" value="1"/>
</dbReference>
<dbReference type="Gene3D" id="3.90.280.10">
    <property type="entry name" value="PEBP-like"/>
    <property type="match status" value="1"/>
</dbReference>
<dbReference type="InterPro" id="IPR008914">
    <property type="entry name" value="PEBP"/>
</dbReference>
<dbReference type="InterPro" id="IPR036610">
    <property type="entry name" value="PEBP-like_sf"/>
</dbReference>
<dbReference type="InterPro" id="IPR035810">
    <property type="entry name" value="PEBP_euk"/>
</dbReference>
<dbReference type="PANTHER" id="PTHR11362">
    <property type="entry name" value="PHOSPHATIDYLETHANOLAMINE-BINDING PROTEIN"/>
    <property type="match status" value="1"/>
</dbReference>
<dbReference type="PANTHER" id="PTHR11362:SF82">
    <property type="entry name" value="PHOSPHATIDYLETHANOLAMINE-BINDING PROTEIN 4"/>
    <property type="match status" value="1"/>
</dbReference>
<dbReference type="Pfam" id="PF01161">
    <property type="entry name" value="PBP"/>
    <property type="match status" value="1"/>
</dbReference>
<dbReference type="SUPFAM" id="SSF49777">
    <property type="entry name" value="PEBP-like"/>
    <property type="match status" value="1"/>
</dbReference>
<sequence>MLRRSIHTTKILQKPNATSHIWSDFTTRPSSLSIQSSKVKNYLFQKKASLDPPSISRRSNRIKYSPPEHIDEIFRMSYDFLEQRSSKFYELANKTKNPLKKDALLIKAEINNPEVQYNFQFNNKLNNVKDIIDYDVPVYRHLGKQHWESYGQMLLMQRLETLAAIPDTLPTLVPRAEVNIKFPFSTGVNKWIEPGEFLSSNVTSMRPIFKIQEYELVNVEKQLYTVLIVNPDVPDLSNDSFKTALCYGLVNINLTYNDNLIDPRKFHSSNIIADYLPPVPEKNAGKQRFVVWVFRQPLIEDKQGPNMLEIDRKELSRDDFDIRQFTKKYNLTAIGAHIWRSEWDAKVAAVREKYGLPPGRVFSRVRR</sequence>
<proteinExistence type="evidence at protein level"/>
<name>RM35_YEAST</name>
<comment type="function">
    <text evidence="11 12">Component of the mitochondrial ribosome (mitoribosome), a dedicated translation machinery responsible for the synthesis of mitochondrial genome-encoded proteins, including at least some of the essential transmembrane subunits of the mitochondrial respiratory chain. The mitoribosomes are attached to the mitochondrial inner membrane and translation products are cotranslationally integrated into the membrane.</text>
</comment>
<comment type="subunit">
    <text evidence="2 6 8">Component of the mitochondrial large ribosomal subunit (mt-LSU). Mature yeast 74S mitochondrial ribosomes consist of a small (37S) and a large (54S) subunit. The 37S small subunit contains a 15S ribosomal RNA (15S mt-rRNA) and 34 different proteins. The 54S large subunit contains a 21S rRNA (21S mt-rRNA) and 46 different proteins.</text>
</comment>
<comment type="subcellular location">
    <subcellularLocation>
        <location evidence="3 5">Mitochondrion</location>
    </subcellularLocation>
    <text evidence="7">Mitoribosomes are tethered to the mitochondrial inner membrane and spatially aligned with the membrane insertion machinery through two distinct membrane contact sites, formed by the 21S rRNA expansion segment 96-ES1 and the inner membrane protein MBA1.</text>
</comment>
<comment type="miscellaneous">
    <text evidence="4">Present with 7700 molecules/cell in log phase SD medium.</text>
</comment>
<comment type="similarity">
    <text evidence="10">Belongs to the phosphatidylethanolamine-binding protein family. Mitochondrion-specific ribosomal protein mL38 subfamily.</text>
</comment>
<protein>
    <recommendedName>
        <fullName evidence="9">Large ribosomal subunit protein mL38</fullName>
    </recommendedName>
    <alternativeName>
        <fullName>54S ribosomal protein L35, mitochondrial</fullName>
    </alternativeName>
    <alternativeName>
        <fullName>YmL35</fullName>
    </alternativeName>
</protein>
<keyword id="KW-0002">3D-structure</keyword>
<keyword id="KW-0903">Direct protein sequencing</keyword>
<keyword id="KW-0496">Mitochondrion</keyword>
<keyword id="KW-1185">Reference proteome</keyword>
<keyword id="KW-0687">Ribonucleoprotein</keyword>
<keyword id="KW-0689">Ribosomal protein</keyword>
<keyword id="KW-0809">Transit peptide</keyword>
<gene>
    <name type="primary">MRPL35</name>
    <name type="ordered locus">YDR322W</name>
    <name type="ORF">D9798.5</name>
</gene>